<feature type="chain" id="PRO_0000270199" description="V-type proton ATPase subunit e 2">
    <location>
        <begin position="1"/>
        <end position="81"/>
    </location>
</feature>
<feature type="topological domain" description="Lumenal" evidence="8">
    <location>
        <begin position="1"/>
        <end position="7"/>
    </location>
</feature>
<feature type="transmembrane region" description="Helical" evidence="3">
    <location>
        <begin position="8"/>
        <end position="28"/>
    </location>
</feature>
<feature type="topological domain" description="Cytoplasmic" evidence="8">
    <location>
        <begin position="29"/>
        <end position="35"/>
    </location>
</feature>
<feature type="transmembrane region" description="Helical" evidence="3">
    <location>
        <begin position="36"/>
        <end position="56"/>
    </location>
</feature>
<feature type="topological domain" description="Lumenal" evidence="8">
    <location>
        <begin position="57"/>
        <end position="81"/>
    </location>
</feature>
<feature type="glycosylation site" description="N-linked (GlcNAc...) asparagine" evidence="3">
    <location>
        <position position="70"/>
    </location>
</feature>
<feature type="splice variant" id="VSP_044857" description="In isoform 4." evidence="7">
    <original>M</original>
    <variation>MRVRGPARLIASGARLLLRMLSALPGWGPAHLQRPLLGPASCLGILRPAM</variation>
    <location>
        <position position="1"/>
    </location>
</feature>
<feature type="splice variant" id="VSP_027104" description="In isoform 2." evidence="6">
    <original>FWLIAILAQLNPLFGPQLKNETIWYVRFLWE</original>
    <variation>LCPALGMTVAPLSLTTPSSGPSPTQLCLVTSSLLLAPRDPDPQGLPGSWKSSQSSQPARALGSPGHSSGRGDVLLQYPHCSGVCPLSQGDAAGELVWVGSFPLQTGQMPGLSPS</variation>
    <location>
        <begin position="51"/>
        <end position="81"/>
    </location>
</feature>
<feature type="splice variant" id="VSP_027105" description="In isoform 3." evidence="5">
    <original>YVRFLWE</original>
    <variation>CPALGMTVAPLSLTTPSSGPSPTQLCLVTSSLLLAPRDPDPQGLPGSWKSSQSSQPARALGSPGHSSGRGDVLLQYPHCSGVCPLSQGDAAGELVWVGSFPLQTGQMPGLSPS</variation>
    <location>
        <begin position="75"/>
        <end position="81"/>
    </location>
</feature>
<reference key="1">
    <citation type="journal article" date="2007" name="Gene">
        <title>Molecular cloning and characterization of a novel form of the human vacuolar H+-ATPase e-subunit: an essential proton pump component.</title>
        <authorList>
            <person name="Blake-Palmer K.G."/>
            <person name="Su Y."/>
            <person name="Smith A.N."/>
            <person name="Karet F.E."/>
        </authorList>
    </citation>
    <scope>NUCLEOTIDE SEQUENCE [MRNA] (ISOFORM 1)</scope>
    <scope>NUCLEOTIDE SEQUENCE [MRNA] OF 1-61 (ISOFORM 2)</scope>
    <scope>TISSUE SPECIFICITY</scope>
    <source>
        <tissue>Brain</tissue>
    </source>
</reference>
<reference key="2">
    <citation type="submission" date="2001-05" db="EMBL/GenBank/DDBJ databases">
        <authorList>
            <person name="Li N."/>
            <person name="Wan T."/>
            <person name="Zhang M."/>
            <person name="Zhang W."/>
            <person name="Cao X."/>
        </authorList>
    </citation>
    <scope>NUCLEOTIDE SEQUENCE [MRNA] (ISOFORM 1)</scope>
</reference>
<reference key="3">
    <citation type="submission" date="2001-11" db="EMBL/GenBank/DDBJ databases">
        <authorList>
            <person name="Zan Q."/>
            <person name="Guo J.H."/>
            <person name="Yu L."/>
        </authorList>
    </citation>
    <scope>NUCLEOTIDE SEQUENCE [MRNA] (ISOFORM 4)</scope>
    <source>
        <tissue>Placenta</tissue>
    </source>
</reference>
<reference key="4">
    <citation type="journal article" date="2004" name="Nat. Genet.">
        <title>Complete sequencing and characterization of 21,243 full-length human cDNAs.</title>
        <authorList>
            <person name="Ota T."/>
            <person name="Suzuki Y."/>
            <person name="Nishikawa T."/>
            <person name="Otsuki T."/>
            <person name="Sugiyama T."/>
            <person name="Irie R."/>
            <person name="Wakamatsu A."/>
            <person name="Hayashi K."/>
            <person name="Sato H."/>
            <person name="Nagai K."/>
            <person name="Kimura K."/>
            <person name="Makita H."/>
            <person name="Sekine M."/>
            <person name="Obayashi M."/>
            <person name="Nishi T."/>
            <person name="Shibahara T."/>
            <person name="Tanaka T."/>
            <person name="Ishii S."/>
            <person name="Yamamoto J."/>
            <person name="Saito K."/>
            <person name="Kawai Y."/>
            <person name="Isono Y."/>
            <person name="Nakamura Y."/>
            <person name="Nagahari K."/>
            <person name="Murakami K."/>
            <person name="Yasuda T."/>
            <person name="Iwayanagi T."/>
            <person name="Wagatsuma M."/>
            <person name="Shiratori A."/>
            <person name="Sudo H."/>
            <person name="Hosoiri T."/>
            <person name="Kaku Y."/>
            <person name="Kodaira H."/>
            <person name="Kondo H."/>
            <person name="Sugawara M."/>
            <person name="Takahashi M."/>
            <person name="Kanda K."/>
            <person name="Yokoi T."/>
            <person name="Furuya T."/>
            <person name="Kikkawa E."/>
            <person name="Omura Y."/>
            <person name="Abe K."/>
            <person name="Kamihara K."/>
            <person name="Katsuta N."/>
            <person name="Sato K."/>
            <person name="Tanikawa M."/>
            <person name="Yamazaki M."/>
            <person name="Ninomiya K."/>
            <person name="Ishibashi T."/>
            <person name="Yamashita H."/>
            <person name="Murakawa K."/>
            <person name="Fujimori K."/>
            <person name="Tanai H."/>
            <person name="Kimata M."/>
            <person name="Watanabe M."/>
            <person name="Hiraoka S."/>
            <person name="Chiba Y."/>
            <person name="Ishida S."/>
            <person name="Ono Y."/>
            <person name="Takiguchi S."/>
            <person name="Watanabe S."/>
            <person name="Yosida M."/>
            <person name="Hotuta T."/>
            <person name="Kusano J."/>
            <person name="Kanehori K."/>
            <person name="Takahashi-Fujii A."/>
            <person name="Hara H."/>
            <person name="Tanase T.-O."/>
            <person name="Nomura Y."/>
            <person name="Togiya S."/>
            <person name="Komai F."/>
            <person name="Hara R."/>
            <person name="Takeuchi K."/>
            <person name="Arita M."/>
            <person name="Imose N."/>
            <person name="Musashino K."/>
            <person name="Yuuki H."/>
            <person name="Oshima A."/>
            <person name="Sasaki N."/>
            <person name="Aotsuka S."/>
            <person name="Yoshikawa Y."/>
            <person name="Matsunawa H."/>
            <person name="Ichihara T."/>
            <person name="Shiohata N."/>
            <person name="Sano S."/>
            <person name="Moriya S."/>
            <person name="Momiyama H."/>
            <person name="Satoh N."/>
            <person name="Takami S."/>
            <person name="Terashima Y."/>
            <person name="Suzuki O."/>
            <person name="Nakagawa S."/>
            <person name="Senoh A."/>
            <person name="Mizoguchi H."/>
            <person name="Goto Y."/>
            <person name="Shimizu F."/>
            <person name="Wakebe H."/>
            <person name="Hishigaki H."/>
            <person name="Watanabe T."/>
            <person name="Sugiyama A."/>
            <person name="Takemoto M."/>
            <person name="Kawakami B."/>
            <person name="Yamazaki M."/>
            <person name="Watanabe K."/>
            <person name="Kumagai A."/>
            <person name="Itakura S."/>
            <person name="Fukuzumi Y."/>
            <person name="Fujimori Y."/>
            <person name="Komiyama M."/>
            <person name="Tashiro H."/>
            <person name="Tanigami A."/>
            <person name="Fujiwara T."/>
            <person name="Ono T."/>
            <person name="Yamada K."/>
            <person name="Fujii Y."/>
            <person name="Ozaki K."/>
            <person name="Hirao M."/>
            <person name="Ohmori Y."/>
            <person name="Kawabata A."/>
            <person name="Hikiji T."/>
            <person name="Kobatake N."/>
            <person name="Inagaki H."/>
            <person name="Ikema Y."/>
            <person name="Okamoto S."/>
            <person name="Okitani R."/>
            <person name="Kawakami T."/>
            <person name="Noguchi S."/>
            <person name="Itoh T."/>
            <person name="Shigeta K."/>
            <person name="Senba T."/>
            <person name="Matsumura K."/>
            <person name="Nakajima Y."/>
            <person name="Mizuno T."/>
            <person name="Morinaga M."/>
            <person name="Sasaki M."/>
            <person name="Togashi T."/>
            <person name="Oyama M."/>
            <person name="Hata H."/>
            <person name="Watanabe M."/>
            <person name="Komatsu T."/>
            <person name="Mizushima-Sugano J."/>
            <person name="Satoh T."/>
            <person name="Shirai Y."/>
            <person name="Takahashi Y."/>
            <person name="Nakagawa K."/>
            <person name="Okumura K."/>
            <person name="Nagase T."/>
            <person name="Nomura N."/>
            <person name="Kikuchi H."/>
            <person name="Masuho Y."/>
            <person name="Yamashita R."/>
            <person name="Nakai K."/>
            <person name="Yada T."/>
            <person name="Nakamura Y."/>
            <person name="Ohara O."/>
            <person name="Isogai T."/>
            <person name="Sugano S."/>
        </authorList>
    </citation>
    <scope>NUCLEOTIDE SEQUENCE [LARGE SCALE MRNA] (ISOFORM 3)</scope>
</reference>
<reference key="5">
    <citation type="journal article" date="2007" name="BMC Genomics">
        <title>The full-ORF clone resource of the German cDNA consortium.</title>
        <authorList>
            <person name="Bechtel S."/>
            <person name="Rosenfelder H."/>
            <person name="Duda A."/>
            <person name="Schmidt C.P."/>
            <person name="Ernst U."/>
            <person name="Wellenreuther R."/>
            <person name="Mehrle A."/>
            <person name="Schuster C."/>
            <person name="Bahr A."/>
            <person name="Bloecker H."/>
            <person name="Heubner D."/>
            <person name="Hoerlein A."/>
            <person name="Michel G."/>
            <person name="Wedler H."/>
            <person name="Koehrer K."/>
            <person name="Ottenwaelder B."/>
            <person name="Poustka A."/>
            <person name="Wiemann S."/>
            <person name="Schupp I."/>
        </authorList>
    </citation>
    <scope>NUCLEOTIDE SEQUENCE [LARGE SCALE MRNA] (ISOFORM 1)</scope>
    <source>
        <tissue>Cerebellum</tissue>
    </source>
</reference>
<reference key="6">
    <citation type="journal article" date="2003" name="Nature">
        <title>The DNA sequence of human chromosome 7.</title>
        <authorList>
            <person name="Hillier L.W."/>
            <person name="Fulton R.S."/>
            <person name="Fulton L.A."/>
            <person name="Graves T.A."/>
            <person name="Pepin K.H."/>
            <person name="Wagner-McPherson C."/>
            <person name="Layman D."/>
            <person name="Maas J."/>
            <person name="Jaeger S."/>
            <person name="Walker R."/>
            <person name="Wylie K."/>
            <person name="Sekhon M."/>
            <person name="Becker M.C."/>
            <person name="O'Laughlin M.D."/>
            <person name="Schaller M.E."/>
            <person name="Fewell G.A."/>
            <person name="Delehaunty K.D."/>
            <person name="Miner T.L."/>
            <person name="Nash W.E."/>
            <person name="Cordes M."/>
            <person name="Du H."/>
            <person name="Sun H."/>
            <person name="Edwards J."/>
            <person name="Bradshaw-Cordum H."/>
            <person name="Ali J."/>
            <person name="Andrews S."/>
            <person name="Isak A."/>
            <person name="Vanbrunt A."/>
            <person name="Nguyen C."/>
            <person name="Du F."/>
            <person name="Lamar B."/>
            <person name="Courtney L."/>
            <person name="Kalicki J."/>
            <person name="Ozersky P."/>
            <person name="Bielicki L."/>
            <person name="Scott K."/>
            <person name="Holmes A."/>
            <person name="Harkins R."/>
            <person name="Harris A."/>
            <person name="Strong C.M."/>
            <person name="Hou S."/>
            <person name="Tomlinson C."/>
            <person name="Dauphin-Kohlberg S."/>
            <person name="Kozlowicz-Reilly A."/>
            <person name="Leonard S."/>
            <person name="Rohlfing T."/>
            <person name="Rock S.M."/>
            <person name="Tin-Wollam A.-M."/>
            <person name="Abbott A."/>
            <person name="Minx P."/>
            <person name="Maupin R."/>
            <person name="Strowmatt C."/>
            <person name="Latreille P."/>
            <person name="Miller N."/>
            <person name="Johnson D."/>
            <person name="Murray J."/>
            <person name="Woessner J.P."/>
            <person name="Wendl M.C."/>
            <person name="Yang S.-P."/>
            <person name="Schultz B.R."/>
            <person name="Wallis J.W."/>
            <person name="Spieth J."/>
            <person name="Bieri T.A."/>
            <person name="Nelson J.O."/>
            <person name="Berkowicz N."/>
            <person name="Wohldmann P.E."/>
            <person name="Cook L.L."/>
            <person name="Hickenbotham M.T."/>
            <person name="Eldred J."/>
            <person name="Williams D."/>
            <person name="Bedell J.A."/>
            <person name="Mardis E.R."/>
            <person name="Clifton S.W."/>
            <person name="Chissoe S.L."/>
            <person name="Marra M.A."/>
            <person name="Raymond C."/>
            <person name="Haugen E."/>
            <person name="Gillett W."/>
            <person name="Zhou Y."/>
            <person name="James R."/>
            <person name="Phelps K."/>
            <person name="Iadanoto S."/>
            <person name="Bubb K."/>
            <person name="Simms E."/>
            <person name="Levy R."/>
            <person name="Clendenning J."/>
            <person name="Kaul R."/>
            <person name="Kent W.J."/>
            <person name="Furey T.S."/>
            <person name="Baertsch R.A."/>
            <person name="Brent M.R."/>
            <person name="Keibler E."/>
            <person name="Flicek P."/>
            <person name="Bork P."/>
            <person name="Suyama M."/>
            <person name="Bailey J.A."/>
            <person name="Portnoy M.E."/>
            <person name="Torrents D."/>
            <person name="Chinwalla A.T."/>
            <person name="Gish W.R."/>
            <person name="Eddy S.R."/>
            <person name="McPherson J.D."/>
            <person name="Olson M.V."/>
            <person name="Eichler E.E."/>
            <person name="Green E.D."/>
            <person name="Waterston R.H."/>
            <person name="Wilson R.K."/>
        </authorList>
    </citation>
    <scope>NUCLEOTIDE SEQUENCE [LARGE SCALE GENOMIC DNA]</scope>
</reference>
<protein>
    <recommendedName>
        <fullName>V-type proton ATPase subunit e 2</fullName>
        <shortName>V-ATPase subunit e 2</shortName>
    </recommendedName>
    <alternativeName>
        <fullName>Lysosomal 9 kDa H(+)-transporting ATPase V0 subunit e2</fullName>
    </alternativeName>
    <alternativeName>
        <fullName>Vacuolar proton pump subunit e 2</fullName>
    </alternativeName>
</protein>
<proteinExistence type="evidence at protein level"/>
<gene>
    <name type="primary">ATP6V0E2</name>
    <name type="synonym">ATP6V0E2L</name>
    <name type="synonym">C7orf32</name>
</gene>
<comment type="function">
    <text evidence="1">Subunit of the V0 complex of vacuolar(H+)-ATPase (V-ATPase), a multisubunit enzyme composed of a peripheral complex (V1) that hydrolyzes ATP and a membrane integral complex (V0) that translocates protons (By similarity). V-ATPase is responsible for acidifying and maintaining the pH of intracellular compartments and in some cell types, is targeted to the plasma membrane, where it is responsible for acidifying the extracellular environment (By similarity).</text>
</comment>
<comment type="subunit">
    <text evidence="1">V-ATPase is a heteromultimeric enzyme made up of two complexes: the ATP-hydrolytic V1 complex and the proton translocation V0 complex. The V1 complex consists of three catalytic AB heterodimers that form a heterohexamer, three peripheral stalks each consisting of EG heterodimers, one central rotor including subunits D and F, and the regulatory subunits C and H. The proton translocation complex V0 consists of the proton transport subunit a, a ring of proteolipid subunits c9c'', rotary subunit d, subunits e and f, and the accessory subunits ATP6AP1/Ac45 and ATP6AP2/PRR.</text>
</comment>
<comment type="subcellular location">
    <subcellularLocation>
        <location evidence="3">Membrane</location>
        <topology evidence="3">Multi-pass membrane protein</topology>
    </subcellularLocation>
    <subcellularLocation>
        <location evidence="2">Cytoplasmic vesicle</location>
        <location evidence="2">Clathrin-coated vesicle membrane</location>
        <topology evidence="3">Multi-pass membrane protein</topology>
    </subcellularLocation>
    <subcellularLocation>
        <location evidence="2">Cytoplasmic vesicle</location>
        <location evidence="2">Secretory vesicle</location>
        <location evidence="2">Synaptic vesicle membrane</location>
        <topology evidence="3">Multi-pass membrane protein</topology>
    </subcellularLocation>
</comment>
<comment type="alternative products">
    <event type="alternative splicing"/>
    <isoform>
        <id>Q8NHE4-1</id>
        <name>1</name>
        <sequence type="displayed"/>
    </isoform>
    <isoform>
        <id>Q8NHE4-2</id>
        <name>2</name>
        <sequence type="described" ref="VSP_027104"/>
    </isoform>
    <isoform>
        <id>Q8NHE4-3</id>
        <name>3</name>
        <sequence type="described" ref="VSP_027105"/>
    </isoform>
    <isoform>
        <id>Q8NHE4-4</id>
        <name>4</name>
        <sequence type="described" ref="VSP_044857"/>
    </isoform>
</comment>
<comment type="tissue specificity">
    <text evidence="4">Isoform 1 is expressed at high levels in heart, brain and kidney and also detected in inner ear epithelium, vestibule, testis, epididymis and bladder. Isoform 2 is expressed in heart, kidney, placenta and pancreas. Isoform 2 is not detected in frontal cortex, but is prevalent in all other brain areas.</text>
</comment>
<comment type="miscellaneous">
    <molecule>Isoform 3</molecule>
    <text evidence="8">May be due to a competing donor splice site.</text>
</comment>
<comment type="similarity">
    <text evidence="8">Belongs to the V-ATPase e1/e2 subunit family.</text>
</comment>
<comment type="sequence caution" evidence="8">
    <conflict type="frameshift">
        <sequence resource="EMBL-CDS" id="AAP97693"/>
    </conflict>
</comment>
<comment type="sequence caution" evidence="8">
    <conflict type="erroneous gene model prediction">
        <sequence resource="EMBL-CDS" id="AAQ96859"/>
    </conflict>
</comment>
<comment type="sequence caution" evidence="8">
    <conflict type="erroneous initiation">
        <sequence resource="EMBL-CDS" id="BAC05292"/>
    </conflict>
    <text>Extended N-terminus.</text>
</comment>
<comment type="sequence caution" evidence="8">
    <conflict type="erroneous initiation">
        <sequence resource="EMBL-CDS" id="CAE45916"/>
    </conflict>
    <text>Extended N-terminus.</text>
</comment>
<evidence type="ECO:0000250" key="1">
    <source>
        <dbReference type="UniProtKB" id="Q2KIB5"/>
    </source>
</evidence>
<evidence type="ECO:0000250" key="2">
    <source>
        <dbReference type="UniProtKB" id="Q5EB76"/>
    </source>
</evidence>
<evidence type="ECO:0000255" key="3"/>
<evidence type="ECO:0000269" key="4">
    <source>
    </source>
</evidence>
<evidence type="ECO:0000303" key="5">
    <source>
    </source>
</evidence>
<evidence type="ECO:0000303" key="6">
    <source>
    </source>
</evidence>
<evidence type="ECO:0000303" key="7">
    <source ref="3"/>
</evidence>
<evidence type="ECO:0000305" key="8"/>
<dbReference type="EMBL" id="DQ995344">
    <property type="protein sequence ID" value="ABK76305.1"/>
    <property type="molecule type" value="mRNA"/>
</dbReference>
<dbReference type="EMBL" id="DQ989009">
    <property type="protein sequence ID" value="ABK88279.1"/>
    <property type="molecule type" value="mRNA"/>
</dbReference>
<dbReference type="EMBL" id="AY037164">
    <property type="protein sequence ID" value="AAK67647.1"/>
    <property type="molecule type" value="mRNA"/>
</dbReference>
<dbReference type="EMBL" id="AF452639">
    <property type="protein sequence ID" value="AAP97693.1"/>
    <property type="status" value="ALT_FRAME"/>
    <property type="molecule type" value="mRNA"/>
</dbReference>
<dbReference type="EMBL" id="AK098362">
    <property type="protein sequence ID" value="BAC05292.1"/>
    <property type="status" value="ALT_INIT"/>
    <property type="molecule type" value="mRNA"/>
</dbReference>
<dbReference type="EMBL" id="BX640846">
    <property type="protein sequence ID" value="CAE45916.1"/>
    <property type="status" value="ALT_INIT"/>
    <property type="molecule type" value="mRNA"/>
</dbReference>
<dbReference type="EMBL" id="AC093458">
    <property type="protein sequence ID" value="AAQ96859.1"/>
    <property type="status" value="ALT_SEQ"/>
    <property type="molecule type" value="Genomic_DNA"/>
</dbReference>
<dbReference type="CCDS" id="CCDS47742.2">
    <molecule id="Q8NHE4-2"/>
</dbReference>
<dbReference type="CCDS" id="CCDS55181.2">
    <molecule id="Q8NHE4-1"/>
</dbReference>
<dbReference type="CCDS" id="CCDS94229.1">
    <molecule id="Q8NHE4-3"/>
</dbReference>
<dbReference type="RefSeq" id="NP_001094062.2">
    <molecule id="Q8NHE4-2"/>
    <property type="nucleotide sequence ID" value="NM_001100592.3"/>
</dbReference>
<dbReference type="RefSeq" id="NP_001276919.2">
    <molecule id="Q8NHE4-3"/>
    <property type="nucleotide sequence ID" value="NM_001289990.2"/>
</dbReference>
<dbReference type="RefSeq" id="NP_001354718.2">
    <molecule id="Q8NHE4-1"/>
    <property type="nucleotide sequence ID" value="NM_001367789.2"/>
</dbReference>
<dbReference type="RefSeq" id="NP_660265.3">
    <molecule id="Q8NHE4-1"/>
    <property type="nucleotide sequence ID" value="NM_145230.4"/>
</dbReference>
<dbReference type="SMR" id="Q8NHE4"/>
<dbReference type="BioGRID" id="127575">
    <property type="interactions" value="4"/>
</dbReference>
<dbReference type="ComplexPortal" id="CPX-2470">
    <property type="entry name" value="Vacuolar proton translocating ATPase complex, ATP6V0A1 variant"/>
</dbReference>
<dbReference type="ComplexPortal" id="CPX-6904">
    <property type="entry name" value="Vacuolar proton translocating ATPase complex, ATP6V0A2 variant"/>
</dbReference>
<dbReference type="ComplexPortal" id="CPX-6905">
    <property type="entry name" value="Vacuolar proton translocating ATPase complex, ATP6V0A3 variant"/>
</dbReference>
<dbReference type="ComplexPortal" id="CPX-6912">
    <property type="entry name" value="Vacuolar proton translocating ATPase complex, ATP6V0A4 variant"/>
</dbReference>
<dbReference type="FunCoup" id="Q8NHE4">
    <property type="interactions" value="457"/>
</dbReference>
<dbReference type="IntAct" id="Q8NHE4">
    <property type="interactions" value="1"/>
</dbReference>
<dbReference type="MINT" id="Q8NHE4"/>
<dbReference type="STRING" id="9606.ENSP00000411672"/>
<dbReference type="DrugBank" id="DB01133">
    <property type="generic name" value="Tiludronic acid"/>
</dbReference>
<dbReference type="GlyCosmos" id="Q8NHE4">
    <property type="glycosylation" value="1 site, No reported glycans"/>
</dbReference>
<dbReference type="GlyGen" id="Q8NHE4">
    <property type="glycosylation" value="2 sites, 2 N-linked glycans (1 site), 1 O-linked glycan (1 site)"/>
</dbReference>
<dbReference type="iPTMnet" id="Q8NHE4"/>
<dbReference type="PhosphoSitePlus" id="Q8NHE4"/>
<dbReference type="BioMuta" id="ATP6V0E2"/>
<dbReference type="DMDM" id="74715659"/>
<dbReference type="MassIVE" id="Q8NHE4"/>
<dbReference type="PeptideAtlas" id="Q8NHE4"/>
<dbReference type="Antibodypedia" id="46340">
    <property type="antibodies" value="29 antibodies from 9 providers"/>
</dbReference>
<dbReference type="DNASU" id="155066"/>
<dbReference type="Ensembl" id="ENST00000421974.7">
    <molecule id="Q8NHE4-2"/>
    <property type="protein sequence ID" value="ENSP00000411672.3"/>
    <property type="gene ID" value="ENSG00000171130.19"/>
</dbReference>
<dbReference type="Ensembl" id="ENST00000425642.3">
    <molecule id="Q8NHE4-1"/>
    <property type="protein sequence ID" value="ENSP00000396148.2"/>
    <property type="gene ID" value="ENSG00000171130.19"/>
</dbReference>
<dbReference type="Ensembl" id="ENST00000456496.7">
    <molecule id="Q8NHE4-1"/>
    <property type="protein sequence ID" value="ENSP00000410220.3"/>
    <property type="gene ID" value="ENSG00000171130.19"/>
</dbReference>
<dbReference type="Ensembl" id="ENST00000464662.5">
    <molecule id="Q8NHE4-1"/>
    <property type="protein sequence ID" value="ENSP00000475645.1"/>
    <property type="gene ID" value="ENSG00000171130.19"/>
</dbReference>
<dbReference type="Ensembl" id="ENST00000471877.5">
    <molecule id="Q8NHE4-1"/>
    <property type="protein sequence ID" value="ENSP00000420679.1"/>
    <property type="gene ID" value="ENSG00000171130.19"/>
</dbReference>
<dbReference type="Ensembl" id="ENST00000479613.5">
    <molecule id="Q8NHE4-3"/>
    <property type="protein sequence ID" value="ENSP00000417939.1"/>
    <property type="gene ID" value="ENSG00000171130.19"/>
</dbReference>
<dbReference type="Ensembl" id="ENST00000606024.5">
    <molecule id="Q8NHE4-2"/>
    <property type="protein sequence ID" value="ENSP00000475904.1"/>
    <property type="gene ID" value="ENSG00000171130.19"/>
</dbReference>
<dbReference type="Ensembl" id="ENST00000649866.2">
    <molecule id="Q8NHE4-1"/>
    <property type="protein sequence ID" value="ENSP00000497146.2"/>
    <property type="gene ID" value="ENSG00000171130.19"/>
</dbReference>
<dbReference type="GeneID" id="155066"/>
<dbReference type="KEGG" id="hsa:155066"/>
<dbReference type="MANE-Select" id="ENST00000425642.3">
    <property type="protein sequence ID" value="ENSP00000396148.2"/>
    <property type="RefSeq nucleotide sequence ID" value="NM_145230.4"/>
    <property type="RefSeq protein sequence ID" value="NP_660265.3"/>
</dbReference>
<dbReference type="UCSC" id="uc003wgp.3">
    <molecule id="Q8NHE4-1"/>
    <property type="organism name" value="human"/>
</dbReference>
<dbReference type="AGR" id="HGNC:21723"/>
<dbReference type="CTD" id="155066"/>
<dbReference type="DisGeNET" id="155066"/>
<dbReference type="GeneCards" id="ATP6V0E2"/>
<dbReference type="HGNC" id="HGNC:21723">
    <property type="gene designation" value="ATP6V0E2"/>
</dbReference>
<dbReference type="HPA" id="ENSG00000171130">
    <property type="expression patterns" value="Tissue enhanced (brain)"/>
</dbReference>
<dbReference type="MIM" id="611019">
    <property type="type" value="gene"/>
</dbReference>
<dbReference type="neXtProt" id="NX_Q8NHE4"/>
<dbReference type="OpenTargets" id="ENSG00000171130"/>
<dbReference type="PharmGKB" id="PA162377277"/>
<dbReference type="VEuPathDB" id="HostDB:ENSG00000171130"/>
<dbReference type="GeneTree" id="ENSGT00940000162476"/>
<dbReference type="HOGENOM" id="CLU_170555_0_1_1"/>
<dbReference type="InParanoid" id="Q8NHE4"/>
<dbReference type="OrthoDB" id="1508846at2759"/>
<dbReference type="PAN-GO" id="Q8NHE4">
    <property type="GO annotations" value="1 GO annotation based on evolutionary models"/>
</dbReference>
<dbReference type="PhylomeDB" id="Q8NHE4"/>
<dbReference type="BioCyc" id="MetaCyc:HS15951-MONOMER"/>
<dbReference type="PathwayCommons" id="Q8NHE4"/>
<dbReference type="Reactome" id="R-HSA-1222556">
    <property type="pathway name" value="ROS and RNS production in phagocytes"/>
</dbReference>
<dbReference type="Reactome" id="R-HSA-77387">
    <property type="pathway name" value="Insulin receptor recycling"/>
</dbReference>
<dbReference type="Reactome" id="R-HSA-917977">
    <property type="pathway name" value="Transferrin endocytosis and recycling"/>
</dbReference>
<dbReference type="Reactome" id="R-HSA-9639288">
    <property type="pathway name" value="Amino acids regulate mTORC1"/>
</dbReference>
<dbReference type="Reactome" id="R-HSA-983712">
    <property type="pathway name" value="Ion channel transport"/>
</dbReference>
<dbReference type="SignaLink" id="Q8NHE4"/>
<dbReference type="SIGNOR" id="Q8NHE4"/>
<dbReference type="BioGRID-ORCS" id="155066">
    <property type="hits" value="10 hits in 1149 CRISPR screens"/>
</dbReference>
<dbReference type="ChiTaRS" id="ATP6V0E2">
    <property type="organism name" value="human"/>
</dbReference>
<dbReference type="GenomeRNAi" id="155066"/>
<dbReference type="Pharos" id="Q8NHE4">
    <property type="development level" value="Tbio"/>
</dbReference>
<dbReference type="PRO" id="PR:Q8NHE4"/>
<dbReference type="Proteomes" id="UP000005640">
    <property type="component" value="Chromosome 7"/>
</dbReference>
<dbReference type="RNAct" id="Q8NHE4">
    <property type="molecule type" value="protein"/>
</dbReference>
<dbReference type="Bgee" id="ENSG00000171130">
    <property type="expression patterns" value="Expressed in Brodmann (1909) area 10 and 205 other cell types or tissues"/>
</dbReference>
<dbReference type="ExpressionAtlas" id="Q8NHE4">
    <property type="expression patterns" value="baseline and differential"/>
</dbReference>
<dbReference type="GO" id="GO:0030665">
    <property type="term" value="C:clathrin-coated vesicle membrane"/>
    <property type="evidence" value="ECO:0007669"/>
    <property type="project" value="UniProtKB-SubCell"/>
</dbReference>
<dbReference type="GO" id="GO:0010008">
    <property type="term" value="C:endosome membrane"/>
    <property type="evidence" value="ECO:0000304"/>
    <property type="project" value="Reactome"/>
</dbReference>
<dbReference type="GO" id="GO:0005765">
    <property type="term" value="C:lysosomal membrane"/>
    <property type="evidence" value="ECO:0000304"/>
    <property type="project" value="Reactome"/>
</dbReference>
<dbReference type="GO" id="GO:0016020">
    <property type="term" value="C:membrane"/>
    <property type="evidence" value="ECO:0000303"/>
    <property type="project" value="UniProtKB"/>
</dbReference>
<dbReference type="GO" id="GO:0030670">
    <property type="term" value="C:phagocytic vesicle membrane"/>
    <property type="evidence" value="ECO:0000304"/>
    <property type="project" value="Reactome"/>
</dbReference>
<dbReference type="GO" id="GO:0030672">
    <property type="term" value="C:synaptic vesicle membrane"/>
    <property type="evidence" value="ECO:0007669"/>
    <property type="project" value="UniProtKB-SubCell"/>
</dbReference>
<dbReference type="GO" id="GO:0000220">
    <property type="term" value="C:vacuolar proton-transporting V-type ATPase, V0 domain"/>
    <property type="evidence" value="ECO:0000250"/>
    <property type="project" value="UniProtKB"/>
</dbReference>
<dbReference type="GO" id="GO:0042625">
    <property type="term" value="F:ATPase-coupled ion transmembrane transporter activity"/>
    <property type="evidence" value="ECO:0000250"/>
    <property type="project" value="UniProtKB"/>
</dbReference>
<dbReference type="GO" id="GO:0046961">
    <property type="term" value="F:proton-transporting ATPase activity, rotational mechanism"/>
    <property type="evidence" value="ECO:0000316"/>
    <property type="project" value="UniProtKB"/>
</dbReference>
<dbReference type="GO" id="GO:1902600">
    <property type="term" value="P:proton transmembrane transport"/>
    <property type="evidence" value="ECO:0000316"/>
    <property type="project" value="UniProtKB"/>
</dbReference>
<dbReference type="GO" id="GO:0016241">
    <property type="term" value="P:regulation of macroautophagy"/>
    <property type="evidence" value="ECO:0000303"/>
    <property type="project" value="ParkinsonsUK-UCL"/>
</dbReference>
<dbReference type="GO" id="GO:0055085">
    <property type="term" value="P:transmembrane transport"/>
    <property type="evidence" value="ECO:0000318"/>
    <property type="project" value="GO_Central"/>
</dbReference>
<dbReference type="GO" id="GO:0007035">
    <property type="term" value="P:vacuolar acidification"/>
    <property type="evidence" value="ECO:0000250"/>
    <property type="project" value="UniProtKB"/>
</dbReference>
<dbReference type="InterPro" id="IPR008389">
    <property type="entry name" value="ATPase_V0-cplx_e1/e2_su"/>
</dbReference>
<dbReference type="InterPro" id="IPR017385">
    <property type="entry name" value="ATPase_V0-cplx_e1/e2_su_met"/>
</dbReference>
<dbReference type="PANTHER" id="PTHR12263:SF2">
    <property type="entry name" value="V-TYPE PROTON ATPASE SUBUNIT E 2"/>
    <property type="match status" value="1"/>
</dbReference>
<dbReference type="PANTHER" id="PTHR12263">
    <property type="entry name" value="VACUOLAR ATP SYNTHASE SUBUNIT H"/>
    <property type="match status" value="1"/>
</dbReference>
<dbReference type="Pfam" id="PF05493">
    <property type="entry name" value="ATP_synt_H"/>
    <property type="match status" value="1"/>
</dbReference>
<dbReference type="PIRSF" id="PIRSF038097">
    <property type="entry name" value="V-ATP_synth_e1/e2"/>
    <property type="match status" value="1"/>
</dbReference>
<name>VA0E2_HUMAN</name>
<sequence>MTAHSFALPVIIFTTFWGLVGIAGPWFVPKGPNRGVIITMLVATAVCCYLFWLIAILAQLNPLFGPQLKNETIWYVRFLWE</sequence>
<keyword id="KW-0025">Alternative splicing</keyword>
<keyword id="KW-0968">Cytoplasmic vesicle</keyword>
<keyword id="KW-0325">Glycoprotein</keyword>
<keyword id="KW-0375">Hydrogen ion transport</keyword>
<keyword id="KW-0406">Ion transport</keyword>
<keyword id="KW-0472">Membrane</keyword>
<keyword id="KW-1267">Proteomics identification</keyword>
<keyword id="KW-1185">Reference proteome</keyword>
<keyword id="KW-0770">Synapse</keyword>
<keyword id="KW-0812">Transmembrane</keyword>
<keyword id="KW-1133">Transmembrane helix</keyword>
<keyword id="KW-0813">Transport</keyword>
<organism>
    <name type="scientific">Homo sapiens</name>
    <name type="common">Human</name>
    <dbReference type="NCBI Taxonomy" id="9606"/>
    <lineage>
        <taxon>Eukaryota</taxon>
        <taxon>Metazoa</taxon>
        <taxon>Chordata</taxon>
        <taxon>Craniata</taxon>
        <taxon>Vertebrata</taxon>
        <taxon>Euteleostomi</taxon>
        <taxon>Mammalia</taxon>
        <taxon>Eutheria</taxon>
        <taxon>Euarchontoglires</taxon>
        <taxon>Primates</taxon>
        <taxon>Haplorrhini</taxon>
        <taxon>Catarrhini</taxon>
        <taxon>Hominidae</taxon>
        <taxon>Homo</taxon>
    </lineage>
</organism>
<accession>Q8NHE4</accession>
<accession>A2T863</accession>
<accession>A2T8L7</accession>
<accession>B5MDP5</accession>
<accession>J3KQW7</accession>
<accession>Q6MZW1</accession>
<accession>Q75L47</accession>
<accession>Q7Z4R7</accession>
<accession>Q8N7I8</accession>